<reference key="1">
    <citation type="journal article" date="2002" name="Plant Cell">
        <title>Molecular cloning and characterization of glucanase inhibitor proteins: coevolution of a counterdefense mechanism by plant pathogens.</title>
        <authorList>
            <person name="Rose J.K."/>
            <person name="Ham K.S."/>
            <person name="Darvill A.G."/>
            <person name="Albersheim P."/>
        </authorList>
    </citation>
    <scope>NUCLEOTIDE SEQUENCE [MRNA]</scope>
    <scope>IDENTIFICATION</scope>
</reference>
<evidence type="ECO:0000255" key="1">
    <source>
        <dbReference type="PROSITE-ProRule" id="PRU00274"/>
    </source>
</evidence>
<evidence type="ECO:0000303" key="2">
    <source>
    </source>
</evidence>
<evidence type="ECO:0000305" key="3"/>
<evidence type="ECO:0000305" key="4">
    <source>
    </source>
</evidence>
<accession>Q945T8</accession>
<protein>
    <recommendedName>
        <fullName evidence="2">Glucanase inhibitor protein 3</fullName>
    </recommendedName>
</protein>
<organism>
    <name type="scientific">Phytophthora sojae</name>
    <name type="common">Soybean stem and root rot agent</name>
    <name type="synonym">Phytophthora megasperma f. sp. glycines</name>
    <dbReference type="NCBI Taxonomy" id="67593"/>
    <lineage>
        <taxon>Eukaryota</taxon>
        <taxon>Sar</taxon>
        <taxon>Stramenopiles</taxon>
        <taxon>Oomycota</taxon>
        <taxon>Peronosporales</taxon>
        <taxon>Peronosporaceae</taxon>
        <taxon>Phytophthora</taxon>
    </lineage>
</organism>
<dbReference type="EMBL" id="AF406609">
    <property type="protein sequence ID" value="AAL11722.1"/>
    <property type="molecule type" value="mRNA"/>
</dbReference>
<dbReference type="SMR" id="Q945T8"/>
<dbReference type="VEuPathDB" id="FungiDB:PHYSODRAFT_532326"/>
<dbReference type="HOGENOM" id="CLU_006842_7_3_1"/>
<dbReference type="GO" id="GO:0005576">
    <property type="term" value="C:extracellular region"/>
    <property type="evidence" value="ECO:0007669"/>
    <property type="project" value="UniProtKB-SubCell"/>
</dbReference>
<dbReference type="GO" id="GO:0004252">
    <property type="term" value="F:serine-type endopeptidase activity"/>
    <property type="evidence" value="ECO:0007669"/>
    <property type="project" value="InterPro"/>
</dbReference>
<dbReference type="GO" id="GO:0006508">
    <property type="term" value="P:proteolysis"/>
    <property type="evidence" value="ECO:0007669"/>
    <property type="project" value="InterPro"/>
</dbReference>
<dbReference type="Gene3D" id="2.40.10.10">
    <property type="entry name" value="Trypsin-like serine proteases"/>
    <property type="match status" value="1"/>
</dbReference>
<dbReference type="InterPro" id="IPR009003">
    <property type="entry name" value="Peptidase_S1_PA"/>
</dbReference>
<dbReference type="InterPro" id="IPR043504">
    <property type="entry name" value="Peptidase_S1_PA_chymotrypsin"/>
</dbReference>
<dbReference type="InterPro" id="IPR051487">
    <property type="entry name" value="Ser/Thr_Proteases_Immune/Dev"/>
</dbReference>
<dbReference type="InterPro" id="IPR001254">
    <property type="entry name" value="Trypsin_dom"/>
</dbReference>
<dbReference type="PANTHER" id="PTHR24256">
    <property type="entry name" value="TRYPTASE-RELATED"/>
    <property type="match status" value="1"/>
</dbReference>
<dbReference type="Pfam" id="PF00089">
    <property type="entry name" value="Trypsin"/>
    <property type="match status" value="1"/>
</dbReference>
<dbReference type="SMART" id="SM00020">
    <property type="entry name" value="Tryp_SPc"/>
    <property type="match status" value="1"/>
</dbReference>
<dbReference type="SUPFAM" id="SSF50494">
    <property type="entry name" value="Trypsin-like serine proteases"/>
    <property type="match status" value="1"/>
</dbReference>
<dbReference type="PROSITE" id="PS50240">
    <property type="entry name" value="TRYPSIN_DOM"/>
    <property type="match status" value="1"/>
</dbReference>
<feature type="chain" id="PRO_0000448094" description="Glucanase inhibitor protein 3">
    <location>
        <begin position="1" status="less than"/>
        <end position="139"/>
    </location>
</feature>
<feature type="domain" description="Peptidase S1" evidence="1">
    <location>
        <begin position="1" status="less than"/>
        <end position="138"/>
    </location>
</feature>
<feature type="disulfide bond" evidence="1">
    <location>
        <begin position="61"/>
        <end position="73"/>
    </location>
</feature>
<feature type="disulfide bond" evidence="1">
    <location>
        <begin position="83"/>
        <end position="114"/>
    </location>
</feature>
<feature type="non-terminal residue" evidence="3">
    <location>
        <position position="1"/>
    </location>
</feature>
<proteinExistence type="evidence at transcript level"/>
<comment type="function">
    <text evidence="4">Secreted effector that suppresses host plant glucan elicitor-mediated defense responses (Probable). Targets host endoglucanases and inhibits the endoglucanase-mediated release of elicitor-active glucan oligosaccharides from P.sojae cell walls (Probable).</text>
</comment>
<comment type="subcellular location">
    <subcellularLocation>
        <location evidence="4">Secreted</location>
    </subcellularLocation>
</comment>
<comment type="similarity">
    <text evidence="3">Belongs to the peptidase S1 family.</text>
</comment>
<comment type="caution">
    <text evidence="4">None of the predicted glucanase inhibitor proteins (GIPS) has an intact catalytic triad, therefore, GIPs are proteolytically inactive.</text>
</comment>
<name>GIP3_PHYSO</name>
<sequence>VLTLEKPSKFAPIKLPKADGSDIFPRVWSKVMGWGVTSYPNGKPSNELQSVDVRVWGDNACENKLGVDKSSLCAGGEAGKDSCVGDTGDPLIKENGRGDADDILLGLSGWGTGCGDKDMPSVYSRVSAGIEWINSVIKK</sequence>
<keyword id="KW-1015">Disulfide bond</keyword>
<keyword id="KW-0964">Secreted</keyword>
<keyword id="KW-0843">Virulence</keyword>